<gene>
    <name evidence="1" type="primary">hisG1</name>
    <name type="synonym">hisG-1</name>
    <name type="ordered locus">GSU1530</name>
</gene>
<proteinExistence type="inferred from homology"/>
<organism>
    <name type="scientific">Geobacter sulfurreducens (strain ATCC 51573 / DSM 12127 / PCA)</name>
    <dbReference type="NCBI Taxonomy" id="243231"/>
    <lineage>
        <taxon>Bacteria</taxon>
        <taxon>Pseudomonadati</taxon>
        <taxon>Thermodesulfobacteriota</taxon>
        <taxon>Desulfuromonadia</taxon>
        <taxon>Geobacterales</taxon>
        <taxon>Geobacteraceae</taxon>
        <taxon>Geobacter</taxon>
    </lineage>
</organism>
<comment type="function">
    <text evidence="1">Catalyzes the condensation of ATP and 5-phosphoribose 1-diphosphate to form N'-(5'-phosphoribosyl)-ATP (PR-ATP). Has a crucial role in the pathway because the rate of histidine biosynthesis seems to be controlled primarily by regulation of HisG enzymatic activity.</text>
</comment>
<comment type="catalytic activity">
    <reaction evidence="1">
        <text>1-(5-phospho-beta-D-ribosyl)-ATP + diphosphate = 5-phospho-alpha-D-ribose 1-diphosphate + ATP</text>
        <dbReference type="Rhea" id="RHEA:18473"/>
        <dbReference type="ChEBI" id="CHEBI:30616"/>
        <dbReference type="ChEBI" id="CHEBI:33019"/>
        <dbReference type="ChEBI" id="CHEBI:58017"/>
        <dbReference type="ChEBI" id="CHEBI:73183"/>
        <dbReference type="EC" id="2.4.2.17"/>
    </reaction>
</comment>
<comment type="cofactor">
    <cofactor evidence="1">
        <name>Mg(2+)</name>
        <dbReference type="ChEBI" id="CHEBI:18420"/>
    </cofactor>
</comment>
<comment type="activity regulation">
    <text evidence="1">Feedback inhibited by histidine.</text>
</comment>
<comment type="pathway">
    <text evidence="1">Amino-acid biosynthesis; L-histidine biosynthesis; L-histidine from 5-phospho-alpha-D-ribose 1-diphosphate: step 1/9.</text>
</comment>
<comment type="subcellular location">
    <subcellularLocation>
        <location evidence="1">Cytoplasm</location>
    </subcellularLocation>
</comment>
<comment type="similarity">
    <text evidence="1">Belongs to the ATP phosphoribosyltransferase family. Long subfamily.</text>
</comment>
<keyword id="KW-0028">Amino-acid biosynthesis</keyword>
<keyword id="KW-0067">ATP-binding</keyword>
<keyword id="KW-0963">Cytoplasm</keyword>
<keyword id="KW-0328">Glycosyltransferase</keyword>
<keyword id="KW-0368">Histidine biosynthesis</keyword>
<keyword id="KW-0460">Magnesium</keyword>
<keyword id="KW-0479">Metal-binding</keyword>
<keyword id="KW-0547">Nucleotide-binding</keyword>
<keyword id="KW-1185">Reference proteome</keyword>
<keyword id="KW-0808">Transferase</keyword>
<protein>
    <recommendedName>
        <fullName evidence="1">ATP phosphoribosyltransferase 1</fullName>
        <shortName evidence="1">ATP-PRT 1</shortName>
        <shortName evidence="1">ATP-PRTase 1</shortName>
        <ecNumber evidence="1">2.4.2.17</ecNumber>
    </recommendedName>
</protein>
<name>HIS11_GEOSL</name>
<feature type="chain" id="PRO_0000151851" description="ATP phosphoribosyltransferase 1">
    <location>
        <begin position="1"/>
        <end position="291"/>
    </location>
</feature>
<reference key="1">
    <citation type="journal article" date="2003" name="Science">
        <title>Genome of Geobacter sulfurreducens: metal reduction in subsurface environments.</title>
        <authorList>
            <person name="Methe B.A."/>
            <person name="Nelson K.E."/>
            <person name="Eisen J.A."/>
            <person name="Paulsen I.T."/>
            <person name="Nelson W.C."/>
            <person name="Heidelberg J.F."/>
            <person name="Wu D."/>
            <person name="Wu M."/>
            <person name="Ward N.L."/>
            <person name="Beanan M.J."/>
            <person name="Dodson R.J."/>
            <person name="Madupu R."/>
            <person name="Brinkac L.M."/>
            <person name="Daugherty S.C."/>
            <person name="DeBoy R.T."/>
            <person name="Durkin A.S."/>
            <person name="Gwinn M.L."/>
            <person name="Kolonay J.F."/>
            <person name="Sullivan S.A."/>
            <person name="Haft D.H."/>
            <person name="Selengut J."/>
            <person name="Davidsen T.M."/>
            <person name="Zafar N."/>
            <person name="White O."/>
            <person name="Tran B."/>
            <person name="Romero C."/>
            <person name="Forberger H.A."/>
            <person name="Weidman J.F."/>
            <person name="Khouri H.M."/>
            <person name="Feldblyum T.V."/>
            <person name="Utterback T.R."/>
            <person name="Van Aken S.E."/>
            <person name="Lovley D.R."/>
            <person name="Fraser C.M."/>
        </authorList>
    </citation>
    <scope>NUCLEOTIDE SEQUENCE [LARGE SCALE GENOMIC DNA]</scope>
    <source>
        <strain>ATCC 51573 / DSM 12127 / PCA</strain>
    </source>
</reference>
<dbReference type="EC" id="2.4.2.17" evidence="1"/>
<dbReference type="EMBL" id="AE017180">
    <property type="protein sequence ID" value="AAR34904.1"/>
    <property type="molecule type" value="Genomic_DNA"/>
</dbReference>
<dbReference type="RefSeq" id="NP_952581.1">
    <property type="nucleotide sequence ID" value="NC_002939.5"/>
</dbReference>
<dbReference type="SMR" id="P60804"/>
<dbReference type="STRING" id="243231.GSU1530"/>
<dbReference type="DNASU" id="2687288"/>
<dbReference type="EnsemblBacteria" id="AAR34904">
    <property type="protein sequence ID" value="AAR34904"/>
    <property type="gene ID" value="GSU1530"/>
</dbReference>
<dbReference type="KEGG" id="gsu:GSU1530"/>
<dbReference type="PATRIC" id="fig|243231.5.peg.1573"/>
<dbReference type="eggNOG" id="COG0040">
    <property type="taxonomic scope" value="Bacteria"/>
</dbReference>
<dbReference type="HOGENOM" id="CLU_038115_1_1_7"/>
<dbReference type="InParanoid" id="P60804"/>
<dbReference type="OrthoDB" id="9801867at2"/>
<dbReference type="UniPathway" id="UPA00031">
    <property type="reaction ID" value="UER00006"/>
</dbReference>
<dbReference type="Proteomes" id="UP000000577">
    <property type="component" value="Chromosome"/>
</dbReference>
<dbReference type="GO" id="GO:0005737">
    <property type="term" value="C:cytoplasm"/>
    <property type="evidence" value="ECO:0007669"/>
    <property type="project" value="UniProtKB-SubCell"/>
</dbReference>
<dbReference type="GO" id="GO:0005524">
    <property type="term" value="F:ATP binding"/>
    <property type="evidence" value="ECO:0007669"/>
    <property type="project" value="UniProtKB-KW"/>
</dbReference>
<dbReference type="GO" id="GO:0003879">
    <property type="term" value="F:ATP phosphoribosyltransferase activity"/>
    <property type="evidence" value="ECO:0000318"/>
    <property type="project" value="GO_Central"/>
</dbReference>
<dbReference type="GO" id="GO:0000287">
    <property type="term" value="F:magnesium ion binding"/>
    <property type="evidence" value="ECO:0007669"/>
    <property type="project" value="UniProtKB-UniRule"/>
</dbReference>
<dbReference type="GO" id="GO:0000105">
    <property type="term" value="P:L-histidine biosynthetic process"/>
    <property type="evidence" value="ECO:0000318"/>
    <property type="project" value="GO_Central"/>
</dbReference>
<dbReference type="CDD" id="cd13593">
    <property type="entry name" value="PBP2_HisGL3"/>
    <property type="match status" value="1"/>
</dbReference>
<dbReference type="FunFam" id="3.30.70.120:FF:000002">
    <property type="entry name" value="ATP phosphoribosyltransferase"/>
    <property type="match status" value="1"/>
</dbReference>
<dbReference type="FunFam" id="3.40.190.10:FF:000258">
    <property type="entry name" value="ATP phosphoribosyltransferase"/>
    <property type="match status" value="1"/>
</dbReference>
<dbReference type="Gene3D" id="3.30.70.120">
    <property type="match status" value="1"/>
</dbReference>
<dbReference type="Gene3D" id="3.40.190.10">
    <property type="entry name" value="Periplasmic binding protein-like II"/>
    <property type="match status" value="2"/>
</dbReference>
<dbReference type="HAMAP" id="MF_00079">
    <property type="entry name" value="HisG_Long"/>
    <property type="match status" value="1"/>
</dbReference>
<dbReference type="InterPro" id="IPR020621">
    <property type="entry name" value="ATP-PRT_HisG_long"/>
</dbReference>
<dbReference type="InterPro" id="IPR013820">
    <property type="entry name" value="ATP_PRibTrfase_cat"/>
</dbReference>
<dbReference type="InterPro" id="IPR001348">
    <property type="entry name" value="ATP_PRibTrfase_HisG"/>
</dbReference>
<dbReference type="InterPro" id="IPR013115">
    <property type="entry name" value="HisG_C"/>
</dbReference>
<dbReference type="InterPro" id="IPR011322">
    <property type="entry name" value="N-reg_PII-like_a/b"/>
</dbReference>
<dbReference type="InterPro" id="IPR015867">
    <property type="entry name" value="N-reg_PII/ATP_PRibTrfase_C"/>
</dbReference>
<dbReference type="NCBIfam" id="TIGR00070">
    <property type="entry name" value="hisG"/>
    <property type="match status" value="1"/>
</dbReference>
<dbReference type="NCBIfam" id="TIGR03455">
    <property type="entry name" value="HisG_C-term"/>
    <property type="match status" value="1"/>
</dbReference>
<dbReference type="PANTHER" id="PTHR21403:SF10">
    <property type="entry name" value="ATP PHOSPHORIBOSYLTRANSFERASE"/>
    <property type="match status" value="1"/>
</dbReference>
<dbReference type="PANTHER" id="PTHR21403">
    <property type="entry name" value="ATP PHOSPHORIBOSYLTRANSFERASE ATP-PRTASE"/>
    <property type="match status" value="1"/>
</dbReference>
<dbReference type="Pfam" id="PF01634">
    <property type="entry name" value="HisG"/>
    <property type="match status" value="1"/>
</dbReference>
<dbReference type="Pfam" id="PF08029">
    <property type="entry name" value="HisG_C"/>
    <property type="match status" value="1"/>
</dbReference>
<dbReference type="SUPFAM" id="SSF54913">
    <property type="entry name" value="GlnB-like"/>
    <property type="match status" value="1"/>
</dbReference>
<dbReference type="SUPFAM" id="SSF53850">
    <property type="entry name" value="Periplasmic binding protein-like II"/>
    <property type="match status" value="1"/>
</dbReference>
<accession>P60804</accession>
<evidence type="ECO:0000255" key="1">
    <source>
        <dbReference type="HAMAP-Rule" id="MF_00079"/>
    </source>
</evidence>
<sequence>MSGLLNFGVPKGSLENATVELFRKAGWQISISSRSYFPGVDDDEMNCKLIRPQEMGKYVERGTIDAGIAGRDWVRENESDVVEVCEMVYSKVSRRPARWVLVVTRDSAVQKPEDLHGATISTELVGFTKRYFAERNIPVTVEFSWGATEAKVVDGLCDAIVEVTETGSTIKANGLRIVCDLMESVPVLIANKAAWADPWKREKIETIATLLKSALAAEGMVGLKMNAPNDQLEAITRVLPSLKNPTVSHLFNSDWVSIESILPEKEVRRIVPELIKLGAEGIVEYPLNKII</sequence>